<sequence length="320" mass="37124">MLLDKLSRPLKVLRISLTDRCNLRCNFCMPPGKEYNFLPKRQLLTPEEIEEYVKIFAKLGVEKVRLTGGEPLLREDLEEIIQRISKVEGIKDIALTTNGVFLKERLKALKEAGLKRITVSVHSLNPEKNQKLVNRSVNLGEVFEVIIRAKELGFKVKVNSVIIKGFNDDEILDLARFFKNLGVTLRFIEYMDVGTVNDWDFSKVVSADEILNLMKKEFTFYPLPKRPEDTSMDFIYEDGNKFGIIASVTKPFCRGCNRIRLSADGKLYTCLFSDKGHDLRNAVDKENFIKEVWKDRKDRYSELRRQMKRERKVEMFKVGG</sequence>
<reference key="1">
    <citation type="journal article" date="1998" name="Nature">
        <title>The complete genome of the hyperthermophilic bacterium Aquifex aeolicus.</title>
        <authorList>
            <person name="Deckert G."/>
            <person name="Warren P.V."/>
            <person name="Gaasterland T."/>
            <person name="Young W.G."/>
            <person name="Lenox A.L."/>
            <person name="Graham D.E."/>
            <person name="Overbeek R."/>
            <person name="Snead M.A."/>
            <person name="Keller M."/>
            <person name="Aujay M."/>
            <person name="Huber R."/>
            <person name="Feldman R.A."/>
            <person name="Short J.M."/>
            <person name="Olsen G.J."/>
            <person name="Swanson R.V."/>
        </authorList>
    </citation>
    <scope>NUCLEOTIDE SEQUENCE [LARGE SCALE GENOMIC DNA]</scope>
    <source>
        <strain>VF5</strain>
    </source>
</reference>
<feature type="chain" id="PRO_0000152946" description="GTP 3',8-cyclase">
    <location>
        <begin position="1"/>
        <end position="320"/>
    </location>
</feature>
<feature type="domain" description="Radical SAM core" evidence="2">
    <location>
        <begin position="5"/>
        <end position="222"/>
    </location>
</feature>
<feature type="binding site" evidence="1">
    <location>
        <position position="14"/>
    </location>
    <ligand>
        <name>GTP</name>
        <dbReference type="ChEBI" id="CHEBI:37565"/>
    </ligand>
</feature>
<feature type="binding site" evidence="1">
    <location>
        <position position="21"/>
    </location>
    <ligand>
        <name>[4Fe-4S] cluster</name>
        <dbReference type="ChEBI" id="CHEBI:49883"/>
        <label>1</label>
        <note>4Fe-4S-S-AdoMet</note>
    </ligand>
</feature>
<feature type="binding site" evidence="1">
    <location>
        <position position="25"/>
    </location>
    <ligand>
        <name>[4Fe-4S] cluster</name>
        <dbReference type="ChEBI" id="CHEBI:49883"/>
        <label>1</label>
        <note>4Fe-4S-S-AdoMet</note>
    </ligand>
</feature>
<feature type="binding site" evidence="1">
    <location>
        <position position="28"/>
    </location>
    <ligand>
        <name>[4Fe-4S] cluster</name>
        <dbReference type="ChEBI" id="CHEBI:49883"/>
        <label>1</label>
        <note>4Fe-4S-S-AdoMet</note>
    </ligand>
</feature>
<feature type="binding site" evidence="1">
    <location>
        <position position="65"/>
    </location>
    <ligand>
        <name>GTP</name>
        <dbReference type="ChEBI" id="CHEBI:37565"/>
    </ligand>
</feature>
<feature type="binding site" evidence="1">
    <location>
        <position position="69"/>
    </location>
    <ligand>
        <name>S-adenosyl-L-methionine</name>
        <dbReference type="ChEBI" id="CHEBI:59789"/>
    </ligand>
</feature>
<feature type="binding site" evidence="1">
    <location>
        <position position="96"/>
    </location>
    <ligand>
        <name>GTP</name>
        <dbReference type="ChEBI" id="CHEBI:37565"/>
    </ligand>
</feature>
<feature type="binding site" evidence="1">
    <location>
        <position position="120"/>
    </location>
    <ligand>
        <name>S-adenosyl-L-methionine</name>
        <dbReference type="ChEBI" id="CHEBI:59789"/>
    </ligand>
</feature>
<feature type="binding site" evidence="1">
    <location>
        <position position="157"/>
    </location>
    <ligand>
        <name>GTP</name>
        <dbReference type="ChEBI" id="CHEBI:37565"/>
    </ligand>
</feature>
<feature type="binding site" evidence="1">
    <location>
        <position position="191"/>
    </location>
    <ligand>
        <name>S-adenosyl-L-methionine</name>
        <dbReference type="ChEBI" id="CHEBI:59789"/>
    </ligand>
</feature>
<feature type="binding site" evidence="1">
    <location>
        <position position="253"/>
    </location>
    <ligand>
        <name>[4Fe-4S] cluster</name>
        <dbReference type="ChEBI" id="CHEBI:49883"/>
        <label>2</label>
        <note>4Fe-4S-substrate</note>
    </ligand>
</feature>
<feature type="binding site" evidence="1">
    <location>
        <position position="256"/>
    </location>
    <ligand>
        <name>[4Fe-4S] cluster</name>
        <dbReference type="ChEBI" id="CHEBI:49883"/>
        <label>2</label>
        <note>4Fe-4S-substrate</note>
    </ligand>
</feature>
<feature type="binding site" evidence="1">
    <location>
        <begin position="258"/>
        <end position="260"/>
    </location>
    <ligand>
        <name>GTP</name>
        <dbReference type="ChEBI" id="CHEBI:37565"/>
    </ligand>
</feature>
<feature type="binding site" evidence="1">
    <location>
        <position position="270"/>
    </location>
    <ligand>
        <name>[4Fe-4S] cluster</name>
        <dbReference type="ChEBI" id="CHEBI:49883"/>
        <label>2</label>
        <note>4Fe-4S-substrate</note>
    </ligand>
</feature>
<keyword id="KW-0004">4Fe-4S</keyword>
<keyword id="KW-0342">GTP-binding</keyword>
<keyword id="KW-0408">Iron</keyword>
<keyword id="KW-0411">Iron-sulfur</keyword>
<keyword id="KW-0456">Lyase</keyword>
<keyword id="KW-0479">Metal-binding</keyword>
<keyword id="KW-0501">Molybdenum cofactor biosynthesis</keyword>
<keyword id="KW-0547">Nucleotide-binding</keyword>
<keyword id="KW-1185">Reference proteome</keyword>
<keyword id="KW-0949">S-adenosyl-L-methionine</keyword>
<gene>
    <name evidence="1" type="primary">moaA</name>
    <name type="ordered locus">aq_2183</name>
</gene>
<protein>
    <recommendedName>
        <fullName evidence="1">GTP 3',8-cyclase</fullName>
        <ecNumber evidence="1">4.1.99.22</ecNumber>
    </recommendedName>
    <alternativeName>
        <fullName evidence="1">Molybdenum cofactor biosynthesis protein A</fullName>
    </alternativeName>
</protein>
<name>MOAA_AQUAE</name>
<evidence type="ECO:0000255" key="1">
    <source>
        <dbReference type="HAMAP-Rule" id="MF_01225"/>
    </source>
</evidence>
<evidence type="ECO:0000255" key="2">
    <source>
        <dbReference type="PROSITE-ProRule" id="PRU01266"/>
    </source>
</evidence>
<proteinExistence type="inferred from homology"/>
<accession>O67929</accession>
<comment type="function">
    <text evidence="1">Catalyzes the cyclization of GTP to (8S)-3',8-cyclo-7,8-dihydroguanosine 5'-triphosphate.</text>
</comment>
<comment type="catalytic activity">
    <reaction evidence="1">
        <text>GTP + AH2 + S-adenosyl-L-methionine = (8S)-3',8-cyclo-7,8-dihydroguanosine 5'-triphosphate + 5'-deoxyadenosine + L-methionine + A + H(+)</text>
        <dbReference type="Rhea" id="RHEA:49576"/>
        <dbReference type="ChEBI" id="CHEBI:13193"/>
        <dbReference type="ChEBI" id="CHEBI:15378"/>
        <dbReference type="ChEBI" id="CHEBI:17319"/>
        <dbReference type="ChEBI" id="CHEBI:17499"/>
        <dbReference type="ChEBI" id="CHEBI:37565"/>
        <dbReference type="ChEBI" id="CHEBI:57844"/>
        <dbReference type="ChEBI" id="CHEBI:59789"/>
        <dbReference type="ChEBI" id="CHEBI:131766"/>
        <dbReference type="EC" id="4.1.99.22"/>
    </reaction>
</comment>
<comment type="cofactor">
    <cofactor evidence="1">
        <name>[4Fe-4S] cluster</name>
        <dbReference type="ChEBI" id="CHEBI:49883"/>
    </cofactor>
    <text evidence="1">Binds 2 [4Fe-4S] clusters. Binds 1 [4Fe-4S] cluster coordinated with 3 cysteines and an exchangeable S-adenosyl-L-methionine and 1 [4Fe-4S] cluster coordinated with 3 cysteines and the GTP-derived substrate.</text>
</comment>
<comment type="pathway">
    <text evidence="1">Cofactor biosynthesis; molybdopterin biosynthesis.</text>
</comment>
<comment type="subunit">
    <text evidence="1">Monomer and homodimer.</text>
</comment>
<comment type="similarity">
    <text evidence="1">Belongs to the radical SAM superfamily. MoaA family.</text>
</comment>
<organism>
    <name type="scientific">Aquifex aeolicus (strain VF5)</name>
    <dbReference type="NCBI Taxonomy" id="224324"/>
    <lineage>
        <taxon>Bacteria</taxon>
        <taxon>Pseudomonadati</taxon>
        <taxon>Aquificota</taxon>
        <taxon>Aquificia</taxon>
        <taxon>Aquificales</taxon>
        <taxon>Aquificaceae</taxon>
        <taxon>Aquifex</taxon>
    </lineage>
</organism>
<dbReference type="EC" id="4.1.99.22" evidence="1"/>
<dbReference type="EMBL" id="AE000657">
    <property type="protein sequence ID" value="AAC07877.1"/>
    <property type="molecule type" value="Genomic_DNA"/>
</dbReference>
<dbReference type="PIR" id="E70487">
    <property type="entry name" value="E70487"/>
</dbReference>
<dbReference type="RefSeq" id="NP_214498.1">
    <property type="nucleotide sequence ID" value="NC_000918.1"/>
</dbReference>
<dbReference type="RefSeq" id="WP_010881434.1">
    <property type="nucleotide sequence ID" value="NC_000918.1"/>
</dbReference>
<dbReference type="SMR" id="O67929"/>
<dbReference type="FunCoup" id="O67929">
    <property type="interactions" value="347"/>
</dbReference>
<dbReference type="STRING" id="224324.aq_2183"/>
<dbReference type="EnsemblBacteria" id="AAC07877">
    <property type="protein sequence ID" value="AAC07877"/>
    <property type="gene ID" value="aq_2183"/>
</dbReference>
<dbReference type="KEGG" id="aae:aq_2183"/>
<dbReference type="PATRIC" id="fig|224324.8.peg.1688"/>
<dbReference type="eggNOG" id="COG2896">
    <property type="taxonomic scope" value="Bacteria"/>
</dbReference>
<dbReference type="HOGENOM" id="CLU_009273_0_1_0"/>
<dbReference type="InParanoid" id="O67929"/>
<dbReference type="OrthoDB" id="9763993at2"/>
<dbReference type="UniPathway" id="UPA00344"/>
<dbReference type="Proteomes" id="UP000000798">
    <property type="component" value="Chromosome"/>
</dbReference>
<dbReference type="GO" id="GO:0051539">
    <property type="term" value="F:4 iron, 4 sulfur cluster binding"/>
    <property type="evidence" value="ECO:0007669"/>
    <property type="project" value="UniProtKB-UniRule"/>
</dbReference>
<dbReference type="GO" id="GO:0061799">
    <property type="term" value="F:cyclic pyranopterin monophosphate synthase activity"/>
    <property type="evidence" value="ECO:0000318"/>
    <property type="project" value="GO_Central"/>
</dbReference>
<dbReference type="GO" id="GO:0061798">
    <property type="term" value="F:GTP 3',8'-cyclase activity"/>
    <property type="evidence" value="ECO:0000318"/>
    <property type="project" value="GO_Central"/>
</dbReference>
<dbReference type="GO" id="GO:0005525">
    <property type="term" value="F:GTP binding"/>
    <property type="evidence" value="ECO:0007669"/>
    <property type="project" value="UniProtKB-UniRule"/>
</dbReference>
<dbReference type="GO" id="GO:0046872">
    <property type="term" value="F:metal ion binding"/>
    <property type="evidence" value="ECO:0007669"/>
    <property type="project" value="UniProtKB-KW"/>
</dbReference>
<dbReference type="GO" id="GO:1904047">
    <property type="term" value="F:S-adenosyl-L-methionine binding"/>
    <property type="evidence" value="ECO:0007669"/>
    <property type="project" value="UniProtKB-UniRule"/>
</dbReference>
<dbReference type="GO" id="GO:0006777">
    <property type="term" value="P:Mo-molybdopterin cofactor biosynthetic process"/>
    <property type="evidence" value="ECO:0000318"/>
    <property type="project" value="GO_Central"/>
</dbReference>
<dbReference type="CDD" id="cd01335">
    <property type="entry name" value="Radical_SAM"/>
    <property type="match status" value="1"/>
</dbReference>
<dbReference type="CDD" id="cd21117">
    <property type="entry name" value="Twitch_MoaA"/>
    <property type="match status" value="1"/>
</dbReference>
<dbReference type="Gene3D" id="3.20.20.70">
    <property type="entry name" value="Aldolase class I"/>
    <property type="match status" value="1"/>
</dbReference>
<dbReference type="HAMAP" id="MF_01225_B">
    <property type="entry name" value="MoaA_B"/>
    <property type="match status" value="1"/>
</dbReference>
<dbReference type="InterPro" id="IPR013785">
    <property type="entry name" value="Aldolase_TIM"/>
</dbReference>
<dbReference type="InterPro" id="IPR006638">
    <property type="entry name" value="Elp3/MiaA/NifB-like_rSAM"/>
</dbReference>
<dbReference type="InterPro" id="IPR013483">
    <property type="entry name" value="MoaA"/>
</dbReference>
<dbReference type="InterPro" id="IPR000385">
    <property type="entry name" value="MoaA_NifB_PqqE_Fe-S-bd_CS"/>
</dbReference>
<dbReference type="InterPro" id="IPR010505">
    <property type="entry name" value="MoaA_twitch"/>
</dbReference>
<dbReference type="InterPro" id="IPR050105">
    <property type="entry name" value="MoCo_biosynth_MoaA/MoaC"/>
</dbReference>
<dbReference type="InterPro" id="IPR007197">
    <property type="entry name" value="rSAM"/>
</dbReference>
<dbReference type="NCBIfam" id="TIGR02666">
    <property type="entry name" value="moaA"/>
    <property type="match status" value="1"/>
</dbReference>
<dbReference type="PANTHER" id="PTHR22960:SF0">
    <property type="entry name" value="MOLYBDENUM COFACTOR BIOSYNTHESIS PROTEIN 1"/>
    <property type="match status" value="1"/>
</dbReference>
<dbReference type="PANTHER" id="PTHR22960">
    <property type="entry name" value="MOLYBDOPTERIN COFACTOR SYNTHESIS PROTEIN A"/>
    <property type="match status" value="1"/>
</dbReference>
<dbReference type="Pfam" id="PF13353">
    <property type="entry name" value="Fer4_12"/>
    <property type="match status" value="1"/>
</dbReference>
<dbReference type="Pfam" id="PF06463">
    <property type="entry name" value="Mob_synth_C"/>
    <property type="match status" value="1"/>
</dbReference>
<dbReference type="Pfam" id="PF04055">
    <property type="entry name" value="Radical_SAM"/>
    <property type="match status" value="1"/>
</dbReference>
<dbReference type="SFLD" id="SFLDG01383">
    <property type="entry name" value="cyclic_pyranopterin_phosphate"/>
    <property type="match status" value="1"/>
</dbReference>
<dbReference type="SFLD" id="SFLDG01216">
    <property type="entry name" value="thioether_bond_formation_requi"/>
    <property type="match status" value="1"/>
</dbReference>
<dbReference type="SMART" id="SM00729">
    <property type="entry name" value="Elp3"/>
    <property type="match status" value="1"/>
</dbReference>
<dbReference type="SUPFAM" id="SSF102114">
    <property type="entry name" value="Radical SAM enzymes"/>
    <property type="match status" value="1"/>
</dbReference>
<dbReference type="PROSITE" id="PS01305">
    <property type="entry name" value="MOAA_NIFB_PQQE"/>
    <property type="match status" value="1"/>
</dbReference>
<dbReference type="PROSITE" id="PS51918">
    <property type="entry name" value="RADICAL_SAM"/>
    <property type="match status" value="1"/>
</dbReference>